<dbReference type="EMBL" id="D85183">
    <property type="protein sequence ID" value="BAA12734.1"/>
    <property type="molecule type" value="mRNA"/>
</dbReference>
<dbReference type="EMBL" id="D38468">
    <property type="protein sequence ID" value="BAA20368.1"/>
    <property type="molecule type" value="mRNA"/>
</dbReference>
<dbReference type="EMBL" id="U62328">
    <property type="protein sequence ID" value="AAC68478.1"/>
    <property type="molecule type" value="mRNA"/>
</dbReference>
<dbReference type="EMBL" id="AF055065">
    <property type="protein sequence ID" value="AAC18089.1"/>
    <property type="molecule type" value="mRNA"/>
</dbReference>
<dbReference type="RefSeq" id="NP_037148.2">
    <property type="nucleotide sequence ID" value="NM_013016.2"/>
</dbReference>
<dbReference type="RefSeq" id="XP_017446986.1">
    <property type="nucleotide sequence ID" value="XM_017591497.3"/>
</dbReference>
<dbReference type="RefSeq" id="XP_063139229.1">
    <property type="nucleotide sequence ID" value="XM_063283159.1"/>
</dbReference>
<dbReference type="RefSeq" id="XP_063139230.1">
    <property type="nucleotide sequence ID" value="XM_063283160.1"/>
</dbReference>
<dbReference type="SMR" id="P97710"/>
<dbReference type="BioGRID" id="247560">
    <property type="interactions" value="4"/>
</dbReference>
<dbReference type="FunCoup" id="P97710">
    <property type="interactions" value="730"/>
</dbReference>
<dbReference type="IntAct" id="P97710">
    <property type="interactions" value="4"/>
</dbReference>
<dbReference type="MINT" id="P97710"/>
<dbReference type="STRING" id="10116.ENSRNOP00000069024"/>
<dbReference type="CarbonylDB" id="P97710"/>
<dbReference type="GlyCosmos" id="P97710">
    <property type="glycosylation" value="13 sites, 24 glycans"/>
</dbReference>
<dbReference type="GlyGen" id="P97710">
    <property type="glycosylation" value="13 sites, 26 N-linked glycans (4 sites), 4 N-linked;o-linked glycans (1 site)"/>
</dbReference>
<dbReference type="iPTMnet" id="P97710"/>
<dbReference type="PhosphoSitePlus" id="P97710"/>
<dbReference type="jPOST" id="P97710"/>
<dbReference type="PaxDb" id="10116-ENSRNOP00000006408"/>
<dbReference type="PeptideAtlas" id="P97710"/>
<dbReference type="Ensembl" id="ENSRNOT00000006408.7">
    <property type="protein sequence ID" value="ENSRNOP00000006408.6"/>
    <property type="gene ID" value="ENSRNOG00000004763.8"/>
</dbReference>
<dbReference type="GeneID" id="25528"/>
<dbReference type="KEGG" id="rno:25528"/>
<dbReference type="UCSC" id="RGD:3449">
    <property type="organism name" value="rat"/>
</dbReference>
<dbReference type="AGR" id="RGD:3449"/>
<dbReference type="CTD" id="140885"/>
<dbReference type="RGD" id="3449">
    <property type="gene designation" value="Sirpa"/>
</dbReference>
<dbReference type="eggNOG" id="ENOG502S1XD">
    <property type="taxonomic scope" value="Eukaryota"/>
</dbReference>
<dbReference type="GeneTree" id="ENSGT00960000186656"/>
<dbReference type="InParanoid" id="P97710"/>
<dbReference type="OrthoDB" id="6370831at2759"/>
<dbReference type="Reactome" id="R-RNO-202733">
    <property type="pathway name" value="Cell surface interactions at the vascular wall"/>
</dbReference>
<dbReference type="Reactome" id="R-RNO-391160">
    <property type="pathway name" value="Signal regulatory protein family interactions"/>
</dbReference>
<dbReference type="Reactome" id="R-RNO-6798695">
    <property type="pathway name" value="Neutrophil degranulation"/>
</dbReference>
<dbReference type="PRO" id="PR:P97710"/>
<dbReference type="Proteomes" id="UP000002494">
    <property type="component" value="Chromosome 3"/>
</dbReference>
<dbReference type="Bgee" id="ENSRNOG00000004763">
    <property type="expression patterns" value="Expressed in frontal cortex and 20 other cell types or tissues"/>
</dbReference>
<dbReference type="ExpressionAtlas" id="P97710">
    <property type="expression patterns" value="baseline and differential"/>
</dbReference>
<dbReference type="GO" id="GO:0009986">
    <property type="term" value="C:cell surface"/>
    <property type="evidence" value="ECO:0000314"/>
    <property type="project" value="ARUK-UCL"/>
</dbReference>
<dbReference type="GO" id="GO:0005886">
    <property type="term" value="C:plasma membrane"/>
    <property type="evidence" value="ECO:0000266"/>
    <property type="project" value="RGD"/>
</dbReference>
<dbReference type="GO" id="GO:0098632">
    <property type="term" value="F:cell-cell adhesion mediator activity"/>
    <property type="evidence" value="ECO:0000266"/>
    <property type="project" value="RGD"/>
</dbReference>
<dbReference type="GO" id="GO:0030695">
    <property type="term" value="F:GTPase regulator activity"/>
    <property type="evidence" value="ECO:0000315"/>
    <property type="project" value="ARUK-UCL"/>
</dbReference>
<dbReference type="GO" id="GO:1990405">
    <property type="term" value="F:protein antigen binding"/>
    <property type="evidence" value="ECO:0000266"/>
    <property type="project" value="RGD"/>
</dbReference>
<dbReference type="GO" id="GO:0086080">
    <property type="term" value="F:protein binding involved in heterotypic cell-cell adhesion"/>
    <property type="evidence" value="ECO:0000353"/>
    <property type="project" value="ARUK-UCL"/>
</dbReference>
<dbReference type="GO" id="GO:0019903">
    <property type="term" value="F:protein phosphatase binding"/>
    <property type="evidence" value="ECO:0000353"/>
    <property type="project" value="ARUK-UCL"/>
</dbReference>
<dbReference type="GO" id="GO:0004864">
    <property type="term" value="F:protein phosphatase inhibitor activity"/>
    <property type="evidence" value="ECO:0000266"/>
    <property type="project" value="RGD"/>
</dbReference>
<dbReference type="GO" id="GO:0045309">
    <property type="term" value="F:protein phosphorylated amino acid binding"/>
    <property type="evidence" value="ECO:0000266"/>
    <property type="project" value="RGD"/>
</dbReference>
<dbReference type="GO" id="GO:1990782">
    <property type="term" value="F:protein tyrosine kinase binding"/>
    <property type="evidence" value="ECO:0000353"/>
    <property type="project" value="ARUK-UCL"/>
</dbReference>
<dbReference type="GO" id="GO:0017124">
    <property type="term" value="F:SH3 domain binding"/>
    <property type="evidence" value="ECO:0007669"/>
    <property type="project" value="UniProtKB-KW"/>
</dbReference>
<dbReference type="GO" id="GO:0007015">
    <property type="term" value="P:actin filament organization"/>
    <property type="evidence" value="ECO:0000266"/>
    <property type="project" value="RGD"/>
</dbReference>
<dbReference type="GO" id="GO:0016477">
    <property type="term" value="P:cell migration"/>
    <property type="evidence" value="ECO:0000314"/>
    <property type="project" value="RGD"/>
</dbReference>
<dbReference type="GO" id="GO:0048870">
    <property type="term" value="P:cell motility"/>
    <property type="evidence" value="ECO:0000266"/>
    <property type="project" value="RGD"/>
</dbReference>
<dbReference type="GO" id="GO:0007160">
    <property type="term" value="P:cell-matrix adhesion"/>
    <property type="evidence" value="ECO:0000266"/>
    <property type="project" value="RGD"/>
</dbReference>
<dbReference type="GO" id="GO:0070301">
    <property type="term" value="P:cellular response to hydrogen peroxide"/>
    <property type="evidence" value="ECO:0000315"/>
    <property type="project" value="ARUK-UCL"/>
</dbReference>
<dbReference type="GO" id="GO:0071347">
    <property type="term" value="P:cellular response to interleukin-1"/>
    <property type="evidence" value="ECO:0000315"/>
    <property type="project" value="ARUK-UCL"/>
</dbReference>
<dbReference type="GO" id="GO:0071349">
    <property type="term" value="P:cellular response to interleukin-12"/>
    <property type="evidence" value="ECO:0000266"/>
    <property type="project" value="RGD"/>
</dbReference>
<dbReference type="GO" id="GO:0071346">
    <property type="term" value="P:cellular response to type II interferon"/>
    <property type="evidence" value="ECO:0000315"/>
    <property type="project" value="ARUK-UCL"/>
</dbReference>
<dbReference type="GO" id="GO:0007010">
    <property type="term" value="P:cytoskeleton organization"/>
    <property type="evidence" value="ECO:0000266"/>
    <property type="project" value="RGD"/>
</dbReference>
<dbReference type="GO" id="GO:0097530">
    <property type="term" value="P:granulocyte migration"/>
    <property type="evidence" value="ECO:0000266"/>
    <property type="project" value="RGD"/>
</dbReference>
<dbReference type="GO" id="GO:0002244">
    <property type="term" value="P:hematopoietic progenitor cell differentiation"/>
    <property type="evidence" value="ECO:0000266"/>
    <property type="project" value="RGD"/>
</dbReference>
<dbReference type="GO" id="GO:0035696">
    <property type="term" value="P:monocyte extravasation"/>
    <property type="evidence" value="ECO:0000315"/>
    <property type="project" value="ARUK-UCL"/>
</dbReference>
<dbReference type="GO" id="GO:0043124">
    <property type="term" value="P:negative regulation of canonical NF-kappaB signal transduction"/>
    <property type="evidence" value="ECO:0000266"/>
    <property type="project" value="RGD"/>
</dbReference>
<dbReference type="GO" id="GO:0071650">
    <property type="term" value="P:negative regulation of chemokine (C-C motif) ligand 5 production"/>
    <property type="evidence" value="ECO:0000266"/>
    <property type="project" value="RGD"/>
</dbReference>
<dbReference type="GO" id="GO:1900016">
    <property type="term" value="P:negative regulation of cytokine production involved in inflammatory response"/>
    <property type="evidence" value="ECO:0000266"/>
    <property type="project" value="RGD"/>
</dbReference>
<dbReference type="GO" id="GO:0070373">
    <property type="term" value="P:negative regulation of ERK1 and ERK2 cascade"/>
    <property type="evidence" value="ECO:0000266"/>
    <property type="project" value="RGD"/>
</dbReference>
<dbReference type="GO" id="GO:0050728">
    <property type="term" value="P:negative regulation of inflammatory response"/>
    <property type="evidence" value="ECO:0000266"/>
    <property type="project" value="RGD"/>
</dbReference>
<dbReference type="GO" id="GO:0032688">
    <property type="term" value="P:negative regulation of interferon-beta production"/>
    <property type="evidence" value="ECO:0000266"/>
    <property type="project" value="RGD"/>
</dbReference>
<dbReference type="GO" id="GO:0032715">
    <property type="term" value="P:negative regulation of interleukin-6 production"/>
    <property type="evidence" value="ECO:0000266"/>
    <property type="project" value="RGD"/>
</dbReference>
<dbReference type="GO" id="GO:0046329">
    <property type="term" value="P:negative regulation of JNK cascade"/>
    <property type="evidence" value="ECO:0000266"/>
    <property type="project" value="RGD"/>
</dbReference>
<dbReference type="GO" id="GO:0031665">
    <property type="term" value="P:negative regulation of lipopolysaccharide-mediated signaling pathway"/>
    <property type="evidence" value="ECO:0000266"/>
    <property type="project" value="RGD"/>
</dbReference>
<dbReference type="GO" id="GO:0071641">
    <property type="term" value="P:negative regulation of macrophage inflammatory protein 1 alpha production"/>
    <property type="evidence" value="ECO:0000266"/>
    <property type="project" value="RGD"/>
</dbReference>
<dbReference type="GO" id="GO:0045019">
    <property type="term" value="P:negative regulation of nitric oxide biosynthetic process"/>
    <property type="evidence" value="ECO:0000266"/>
    <property type="project" value="RGD"/>
</dbReference>
<dbReference type="GO" id="GO:0050765">
    <property type="term" value="P:negative regulation of phagocytosis"/>
    <property type="evidence" value="ECO:0000315"/>
    <property type="project" value="ARUK-UCL"/>
</dbReference>
<dbReference type="GO" id="GO:0032720">
    <property type="term" value="P:negative regulation of tumor necrosis factor production"/>
    <property type="evidence" value="ECO:0000266"/>
    <property type="project" value="RGD"/>
</dbReference>
<dbReference type="GO" id="GO:0006911">
    <property type="term" value="P:phagocytosis, engulfment"/>
    <property type="evidence" value="ECO:0000266"/>
    <property type="project" value="RGD"/>
</dbReference>
<dbReference type="GO" id="GO:0006910">
    <property type="term" value="P:phagocytosis, recognition"/>
    <property type="evidence" value="ECO:0000266"/>
    <property type="project" value="RGD"/>
</dbReference>
<dbReference type="GO" id="GO:0050766">
    <property type="term" value="P:positive regulation of phagocytosis"/>
    <property type="evidence" value="ECO:0000266"/>
    <property type="project" value="RGD"/>
</dbReference>
<dbReference type="GO" id="GO:2000379">
    <property type="term" value="P:positive regulation of reactive oxygen species metabolic process"/>
    <property type="evidence" value="ECO:0000266"/>
    <property type="project" value="RGD"/>
</dbReference>
<dbReference type="GO" id="GO:0050870">
    <property type="term" value="P:positive regulation of T cell activation"/>
    <property type="evidence" value="ECO:0000318"/>
    <property type="project" value="GO_Central"/>
</dbReference>
<dbReference type="GO" id="GO:0010468">
    <property type="term" value="P:regulation of gene expression"/>
    <property type="evidence" value="ECO:0000266"/>
    <property type="project" value="RGD"/>
</dbReference>
<dbReference type="GO" id="GO:0032651">
    <property type="term" value="P:regulation of interleukin-1 beta production"/>
    <property type="evidence" value="ECO:0000315"/>
    <property type="project" value="ARUK-UCL"/>
</dbReference>
<dbReference type="GO" id="GO:0032675">
    <property type="term" value="P:regulation of interleukin-6 production"/>
    <property type="evidence" value="ECO:0000315"/>
    <property type="project" value="ARUK-UCL"/>
</dbReference>
<dbReference type="GO" id="GO:0045428">
    <property type="term" value="P:regulation of nitric oxide biosynthetic process"/>
    <property type="evidence" value="ECO:0000315"/>
    <property type="project" value="ARUK-UCL"/>
</dbReference>
<dbReference type="GO" id="GO:0032680">
    <property type="term" value="P:regulation of tumor necrosis factor production"/>
    <property type="evidence" value="ECO:0000315"/>
    <property type="project" value="ARUK-UCL"/>
</dbReference>
<dbReference type="GO" id="GO:0032649">
    <property type="term" value="P:regulation of type II interferon production"/>
    <property type="evidence" value="ECO:0000266"/>
    <property type="project" value="RGD"/>
</dbReference>
<dbReference type="CDD" id="cd05772">
    <property type="entry name" value="IgC1_SIRP_domain_2"/>
    <property type="match status" value="1"/>
</dbReference>
<dbReference type="CDD" id="cd16085">
    <property type="entry name" value="IgC1_SIRP_domain_3"/>
    <property type="match status" value="1"/>
</dbReference>
<dbReference type="FunFam" id="2.60.40.10:FF:000295">
    <property type="entry name" value="Tyrosine-protein phosphatase non-receptor type substrate 1"/>
    <property type="match status" value="1"/>
</dbReference>
<dbReference type="FunFam" id="2.60.40.10:FF:000454">
    <property type="entry name" value="Tyrosine-protein phosphatase non-receptor type substrate 1"/>
    <property type="match status" value="1"/>
</dbReference>
<dbReference type="Gene3D" id="2.60.40.10">
    <property type="entry name" value="Immunoglobulins"/>
    <property type="match status" value="3"/>
</dbReference>
<dbReference type="InterPro" id="IPR051755">
    <property type="entry name" value="Ig-like_CS_Receptor"/>
</dbReference>
<dbReference type="InterPro" id="IPR007110">
    <property type="entry name" value="Ig-like_dom"/>
</dbReference>
<dbReference type="InterPro" id="IPR036179">
    <property type="entry name" value="Ig-like_dom_sf"/>
</dbReference>
<dbReference type="InterPro" id="IPR013783">
    <property type="entry name" value="Ig-like_fold"/>
</dbReference>
<dbReference type="InterPro" id="IPR003006">
    <property type="entry name" value="Ig/MHC_CS"/>
</dbReference>
<dbReference type="InterPro" id="IPR003597">
    <property type="entry name" value="Ig_C1-set"/>
</dbReference>
<dbReference type="InterPro" id="IPR003599">
    <property type="entry name" value="Ig_sub"/>
</dbReference>
<dbReference type="InterPro" id="IPR013106">
    <property type="entry name" value="Ig_V-set"/>
</dbReference>
<dbReference type="PANTHER" id="PTHR19971">
    <property type="entry name" value="SIGNAL-REGULATORY PROTEIN BETA"/>
    <property type="match status" value="1"/>
</dbReference>
<dbReference type="Pfam" id="PF07654">
    <property type="entry name" value="C1-set"/>
    <property type="match status" value="2"/>
</dbReference>
<dbReference type="Pfam" id="PF07686">
    <property type="entry name" value="V-set"/>
    <property type="match status" value="1"/>
</dbReference>
<dbReference type="SMART" id="SM00409">
    <property type="entry name" value="IG"/>
    <property type="match status" value="2"/>
</dbReference>
<dbReference type="SMART" id="SM00407">
    <property type="entry name" value="IGc1"/>
    <property type="match status" value="2"/>
</dbReference>
<dbReference type="SUPFAM" id="SSF48726">
    <property type="entry name" value="Immunoglobulin"/>
    <property type="match status" value="3"/>
</dbReference>
<dbReference type="PROSITE" id="PS50835">
    <property type="entry name" value="IG_LIKE"/>
    <property type="match status" value="3"/>
</dbReference>
<dbReference type="PROSITE" id="PS00290">
    <property type="entry name" value="IG_MHC"/>
    <property type="match status" value="1"/>
</dbReference>
<feature type="signal peptide" evidence="7">
    <location>
        <begin position="1"/>
        <end position="31"/>
    </location>
</feature>
<feature type="chain" id="PRO_0000014943" description="Tyrosine-protein phosphatase non-receptor type substrate 1">
    <location>
        <begin position="32"/>
        <end position="509"/>
    </location>
</feature>
<feature type="topological domain" description="Extracellular" evidence="3">
    <location>
        <begin position="32"/>
        <end position="373"/>
    </location>
</feature>
<feature type="transmembrane region" description="Helical" evidence="3">
    <location>
        <begin position="374"/>
        <end position="394"/>
    </location>
</feature>
<feature type="topological domain" description="Cytoplasmic" evidence="3">
    <location>
        <begin position="395"/>
        <end position="509"/>
    </location>
</feature>
<feature type="domain" description="Ig-like V-type">
    <location>
        <begin position="32"/>
        <end position="138"/>
    </location>
</feature>
<feature type="domain" description="Ig-like C1-type 1">
    <location>
        <begin position="150"/>
        <end position="248"/>
    </location>
</feature>
<feature type="domain" description="Ig-like C1-type 2">
    <location>
        <begin position="255"/>
        <end position="349"/>
    </location>
</feature>
<feature type="region of interest" description="Disordered" evidence="5">
    <location>
        <begin position="441"/>
        <end position="472"/>
    </location>
</feature>
<feature type="region of interest" description="Disordered" evidence="5">
    <location>
        <begin position="485"/>
        <end position="509"/>
    </location>
</feature>
<feature type="short sequence motif" description="SH2-binding" evidence="3">
    <location>
        <begin position="436"/>
        <end position="439"/>
    </location>
</feature>
<feature type="short sequence motif" description="SH3-binding" evidence="3">
    <location>
        <begin position="446"/>
        <end position="451"/>
    </location>
</feature>
<feature type="short sequence motif" description="SH2-binding" evidence="3">
    <location>
        <begin position="460"/>
        <end position="463"/>
    </location>
</feature>
<feature type="short sequence motif" description="SH2-binding" evidence="3">
    <location>
        <begin position="477"/>
        <end position="480"/>
    </location>
</feature>
<feature type="short sequence motif" description="SH2-binding" evidence="3">
    <location>
        <begin position="501"/>
        <end position="504"/>
    </location>
</feature>
<feature type="compositionally biased region" description="Polar residues" evidence="5">
    <location>
        <begin position="500"/>
        <end position="509"/>
    </location>
</feature>
<feature type="modified residue" description="Phosphotyrosine; by Tyr-kinases" evidence="3">
    <location>
        <position position="436"/>
    </location>
</feature>
<feature type="modified residue" description="Phosphotyrosine; by Tyr-kinases" evidence="3">
    <location>
        <position position="460"/>
    </location>
</feature>
<feature type="modified residue" description="Phosphotyrosine; by Tyr-kinases" evidence="9">
    <location>
        <position position="477"/>
    </location>
</feature>
<feature type="modified residue" description="Phosphotyrosine; by Tyr-kinases" evidence="9">
    <location>
        <position position="501"/>
    </location>
</feature>
<feature type="glycosylation site" description="N-linked (GlcNAc...) asparagine" evidence="3">
    <location>
        <position position="54"/>
    </location>
</feature>
<feature type="glycosylation site" description="N-linked (GlcNAc...) asparagine" evidence="13">
    <location>
        <position position="93"/>
    </location>
</feature>
<feature type="glycosylation site" description="N-linked (GlcNAc...) asparagine" evidence="13">
    <location>
        <position position="169"/>
    </location>
</feature>
<feature type="glycosylation site" description="N-linked (GlcNAc...) asparagine" evidence="3">
    <location>
        <position position="181"/>
    </location>
</feature>
<feature type="glycosylation site" description="N-linked (GlcNAc...) asparagine" evidence="3">
    <location>
        <position position="205"/>
    </location>
</feature>
<feature type="glycosylation site" description="N-linked (GlcNAc...) asparagine" evidence="3">
    <location>
        <position position="209"/>
    </location>
</feature>
<feature type="glycosylation site" description="N-linked (GlcNAc...) asparagine" evidence="3">
    <location>
        <position position="242"/>
    </location>
</feature>
<feature type="glycosylation site" description="N-linked (GlcNAc...) asparagine" evidence="3">
    <location>
        <position position="246"/>
    </location>
</feature>
<feature type="glycosylation site" description="N-linked (GlcNAc...) asparagine" evidence="3">
    <location>
        <position position="271"/>
    </location>
</feature>
<feature type="glycosylation site" description="N-linked (GlcNAc...) asparagine" evidence="3">
    <location>
        <position position="293"/>
    </location>
</feature>
<feature type="glycosylation site" description="N-linked (GlcNAc...) asparagine" evidence="13">
    <location>
        <position position="312"/>
    </location>
</feature>
<feature type="glycosylation site" description="N-linked (GlcNAc...) asparagine" evidence="3">
    <location>
        <position position="320"/>
    </location>
</feature>
<feature type="glycosylation site" description="N-linked (GlcNAc...) asparagine" evidence="3">
    <location>
        <position position="345"/>
    </location>
</feature>
<feature type="disulfide bond" evidence="4">
    <location>
        <begin position="55"/>
        <end position="122"/>
    </location>
</feature>
<feature type="disulfide bond" evidence="4">
    <location>
        <begin position="172"/>
        <end position="229"/>
    </location>
</feature>
<feature type="disulfide bond" evidence="4">
    <location>
        <begin position="274"/>
        <end position="332"/>
    </location>
</feature>
<feature type="mutagenesis site" description="Abolishes tyrosine phosphorylation and PTPN11 binding; when associated with F-460; F-477 and F-501." evidence="9">
    <original>Y</original>
    <variation>F</variation>
    <location>
        <position position="436"/>
    </location>
</feature>
<feature type="mutagenesis site" description="Abolishes tyrosine phosphorylation and PTPN11 binding; when associated with F-436; F-477 and F-501." evidence="9">
    <original>Y</original>
    <variation>F</variation>
    <location>
        <position position="460"/>
    </location>
</feature>
<feature type="mutagenesis site" description="Strongly reduces insulin-induced tyrosine phosphorylation and PTPN11 binding. Abolishes tyrosine phosphorylation and PTPN11 binding; when associated with F-436; F-460 and F-501." evidence="9">
    <original>Y</original>
    <variation>F</variation>
    <location>
        <position position="477"/>
    </location>
</feature>
<feature type="mutagenesis site" description="Strongly reduces insulin-induced tyrosine phosphorylation and PTPN11 binding. Abolishes tyrosine phosphorylation and PTPN11 binding; when associated with F-436; F-460 and F-477." evidence="9">
    <original>Y</original>
    <variation>F</variation>
    <location>
        <position position="501"/>
    </location>
</feature>
<feature type="sequence conflict" description="In Ref. 4." evidence="12" ref="4">
    <original>P</original>
    <variation>L</variation>
    <location>
        <position position="8"/>
    </location>
</feature>
<feature type="sequence conflict" description="In Ref. 4." evidence="12" ref="4">
    <location>
        <position position="10"/>
    </location>
</feature>
<feature type="sequence conflict" description="In Ref. 3; AAC68478." evidence="12" ref="3">
    <original>F</original>
    <variation>I</variation>
    <location>
        <position position="25"/>
    </location>
</feature>
<feature type="sequence conflict" description="In Ref. 4; AAC18089." evidence="12" ref="4">
    <original>S</original>
    <variation>C</variation>
    <location>
        <position position="58"/>
    </location>
</feature>
<feature type="sequence conflict" description="In Ref. 3; AA sequence." evidence="12" ref="3">
    <original>KR</original>
    <variation>MP</variation>
    <location>
        <begin position="99"/>
        <end position="100"/>
    </location>
</feature>
<feature type="sequence conflict" description="In Ref. 2; BAA20368." evidence="12" ref="2">
    <original>G</original>
    <variation>A</variation>
    <location>
        <position position="162"/>
    </location>
</feature>
<feature type="sequence conflict" description="In Ref. 3; AAC68478." evidence="12" ref="3">
    <original>D</original>
    <variation>N</variation>
    <location>
        <position position="189"/>
    </location>
</feature>
<feature type="sequence conflict" description="In Ref. 3; AA sequence." evidence="12" ref="3">
    <original>N</original>
    <variation>L</variation>
    <location>
        <position position="205"/>
    </location>
</feature>
<feature type="sequence conflict" description="In Ref. 3; AA sequence." evidence="12" ref="3">
    <original>N</original>
    <variation>G</variation>
    <location>
        <position position="209"/>
    </location>
</feature>
<feature type="sequence conflict" description="In Ref. 3; AA sequence." evidence="12" ref="3">
    <original>G</original>
    <variation>F</variation>
    <location>
        <position position="405"/>
    </location>
</feature>
<feature type="sequence conflict" description="In Ref. 3; AA sequence." evidence="12" ref="3">
    <original>E</original>
    <variation>P</variation>
    <location>
        <position position="416"/>
    </location>
</feature>
<feature type="sequence conflict" description="In Ref. 3; AA sequence." evidence="12" ref="3">
    <original>NARE</original>
    <variation>EGQN</variation>
    <location>
        <begin position="418"/>
        <end position="421"/>
    </location>
</feature>
<feature type="sequence conflict" description="In Ref. 3; AA sequence." evidence="12" ref="3">
    <original>R</original>
    <variation>E</variation>
    <location>
        <position position="450"/>
    </location>
</feature>
<feature type="sequence conflict" description="In Ref. 3; AA sequence." evidence="12" ref="3">
    <location>
        <position position="499"/>
    </location>
</feature>
<comment type="function">
    <text evidence="1 2 7">Immunoglobulin-like cell surface receptor for CD47. Acts as docking protein and induces translocation of PTPN6, PTPN11 and other binding partners from the cytosol to the plasma membrane. Supports adhesion of cerebellar neurons, neurite outgrowth and glial cell attachment. May play a key role in intracellular signaling during synaptogenesis and in synaptic function. Involved in the negative regulation of receptor tyrosine kinase-coupled cellular responses induced by cell adhesion, growth factors or insulin. Mediates negative regulation of phagocytosis, mast cell activation and dendritic cell activation. CD47 binding prevents maturation of immature dendritic cells and inhibits cytokine production by mature dendritic cells. Plays a role in antiviral immunity and limits new world arenavirus infection by decreasing virus internalization (By similarity). Receptor for THBS1 (PubMed:24511121). Interaction with THBS1 stimulates phosphorylation of SIRPA (PubMed:24511121). In response to THBS1, involved in ROS signaling in non-phagocytic cells, stimulating NADPH oxidase-derived ROS production (PubMed:24511121).</text>
</comment>
<comment type="subunit">
    <text evidence="1 2">Binds PTPN11 when tyrosine-phosphorylated, except in macrophages, where it primarily binds PTPN6. Binds GRB2 in vitro. Binds FGR. Binds JAK2 irrespective of its phosphorylation status and forms a stable complex. Binds SCAP1 and/or SCAP2. The resulting complex recruits FYB1. Binds PTK2B (By similarity). Interacts with TRIM2 (By similarity).</text>
</comment>
<comment type="interaction">
    <interactant intactId="EBI-7945080">
        <id>P97710</id>
    </interactant>
    <interactant intactId="EBI-7945021">
        <id>Q9R044</id>
        <label>Nphs1</label>
    </interactant>
    <organismsDiffer>false</organismsDiffer>
    <experiments>2</experiments>
</comment>
<comment type="interaction">
    <interactant intactId="EBI-7945080">
        <id>P97710</id>
    </interactant>
    <interactant intactId="EBI-7180604">
        <id>P41499</id>
        <label>Ptpn11</label>
    </interactant>
    <organismsDiffer>false</organismsDiffer>
    <experiments>3</experiments>
</comment>
<comment type="interaction">
    <interactant intactId="EBI-7945080">
        <id>P97710</id>
    </interactant>
    <interactant intactId="EBI-297779">
        <id>Q06124</id>
        <label>PTPN11</label>
    </interactant>
    <organismsDiffer>true</organismsDiffer>
    <experiments>3</experiments>
</comment>
<comment type="subcellular location">
    <subcellularLocation>
        <location>Membrane</location>
        <topology>Single-pass type I membrane protein</topology>
    </subcellularLocation>
</comment>
<comment type="tissue specificity">
    <text evidence="10 11">Highly expressed in brain, spleen, lung, liver and kidney. Detected at lower levels in heart. Highly expressed in alveolar and peritoneal macrophages, and at lower levels in dendritic cells.</text>
</comment>
<comment type="PTM">
    <text evidence="6 11">N-glycosylated.</text>
</comment>
<comment type="PTM">
    <text evidence="6 7 8 9">Phosphorylated on tyrosine residues in response to insulin, cell adhesion or epidermal growth factors. Dephosphorylated by PTPN11.</text>
</comment>
<protein>
    <recommendedName>
        <fullName>Tyrosine-protein phosphatase non-receptor type substrate 1</fullName>
        <shortName>SHP substrate 1</shortName>
        <shortName>SHPS-1</shortName>
    </recommendedName>
    <alternativeName>
        <fullName>Brain Ig-like molecule with tyrosine-based activation motifs</fullName>
        <shortName>Bit</shortName>
    </alternativeName>
    <alternativeName>
        <fullName>CD172 antigen-like family member A</fullName>
    </alternativeName>
    <alternativeName>
        <fullName>Inhibitory receptor SHPS-1</fullName>
    </alternativeName>
    <alternativeName>
        <fullName>Macrophage fusion receptor</fullName>
    </alternativeName>
    <alternativeName>
        <fullName>Macrophage membrane protein MFP150</fullName>
    </alternativeName>
    <alternativeName>
        <fullName>Signal-regulatory protein alpha-1</fullName>
        <shortName>Sirp-alpha-1</shortName>
    </alternativeName>
    <cdAntigenName>CD172a</cdAntigenName>
</protein>
<name>SHPS1_RAT</name>
<reference key="1">
    <citation type="journal article" date="1996" name="Mol. Cell. Biol.">
        <title>A novel membrane glycoprotein, SHPS-1, that binds the SH2-domain-containing protein tyrosine phosphatase SHP-2 in response to mitogens and cell adhesion.</title>
        <authorList>
            <person name="Fujioka Y."/>
            <person name="Matozaki T."/>
            <person name="Noguchi T."/>
            <person name="Iwamatsu A."/>
            <person name="Yamao T."/>
            <person name="Takahashi N."/>
            <person name="Tsuda M."/>
            <person name="Takada T."/>
            <person name="Kasuga M."/>
        </authorList>
    </citation>
    <scope>NUCLEOTIDE SEQUENCE [MRNA]</scope>
    <scope>PROTEIN SEQUENCE OF 42-60; 68-91; 128-137; 150-158; 174-189; 192-202; 204-212; 218-237; 259-270; 279-282; 405-415 AND 446-453</scope>
    <scope>GLYCOSYLATION</scope>
    <scope>PHOSPHORYLATION AT TYROSINE RESIDUES</scope>
    <scope>INTERACTION WITH PTPN6 AND PTPN11</scope>
    <source>
        <tissue>Fetal fibroblast</tissue>
    </source>
</reference>
<reference key="2">
    <citation type="journal article" date="1997" name="FEBS Lett.">
        <title>BIT, an immune antigen receptor-like molecule in the brain.</title>
        <authorList>
            <person name="Sano S."/>
            <person name="Ohnishi H."/>
            <person name="Omori A."/>
            <person name="Hasegawa J."/>
            <person name="Kubota M."/>
        </authorList>
    </citation>
    <scope>NUCLEOTIDE SEQUENCE [MRNA]</scope>
    <scope>PROTEIN SEQUENCE OF 32-48 AND 446-453</scope>
    <scope>FUNCTION</scope>
    <scope>PHOSPHORYLATION AT TYROSINE RESIDUES</scope>
    <source>
        <strain>Sprague-Dawley</strain>
        <tissue>Brain</tissue>
    </source>
</reference>
<reference key="3">
    <citation type="journal article" date="1998" name="Mol. Cell. Biol.">
        <title>MFR, a putative receptor mediating the fusion of macrophages.</title>
        <authorList>
            <person name="Saginario C."/>
            <person name="Sterling H."/>
            <person name="Beckers C."/>
            <person name="Kobayashi R."/>
            <person name="Solimena M."/>
            <person name="Ullu E."/>
            <person name="Vignery A."/>
        </authorList>
    </citation>
    <scope>NUCLEOTIDE SEQUENCE [MRNA]</scope>
    <scope>PROTEIN SEQUENCE OF 99-107; 128-149; 192-217; 405-417; 419-429; 446-467 AND 496-506</scope>
    <scope>GLYCOSYLATION</scope>
    <scope>TISSUE SPECIFICITY</scope>
    <source>
        <strain>Fischer 344</strain>
        <tissue>Macrophage</tissue>
    </source>
</reference>
<reference key="4">
    <citation type="journal article" date="1998" name="J. Immunol.">
        <title>Signal-regulatory protein is selectively expressed by myeloid and neuronal cells.</title>
        <authorList>
            <person name="Adams S."/>
            <person name="van der Laan L.J.W."/>
            <person name="Vernon-Wilson E."/>
            <person name="Renardel de Lavalette C."/>
            <person name="Doepp E.A."/>
            <person name="Dijkstra C.D."/>
            <person name="Simmons D.L."/>
            <person name="van den Berg T.K."/>
        </authorList>
    </citation>
    <scope>NUCLEOTIDE SEQUENCE [MRNA] OF 1-419</scope>
    <scope>TISSUE SPECIFICITY</scope>
    <source>
        <strain>WAG/Rij</strain>
        <tissue>Alveolar macrophage</tissue>
    </source>
</reference>
<reference key="5">
    <citation type="submission" date="2007-09" db="UniProtKB">
        <authorList>
            <person name="Lubec G."/>
            <person name="Kang S.U."/>
            <person name="Lubec S."/>
        </authorList>
    </citation>
    <scope>PROTEIN SEQUENCE OF 192-203; 218-226 AND 297-307</scope>
    <scope>IDENTIFICATION BY MASS SPECTROMETRY</scope>
    <source>
        <strain>Sprague-Dawley</strain>
        <tissue>Brain</tissue>
    </source>
</reference>
<reference key="6">
    <citation type="journal article" date="1997" name="Biochem. Biophys. Res. Commun.">
        <title>Epidermal growth factor stimulates the tyrosine phosphorylation of SHPS-1 and association of SHPS-1 with SHP-2, a SH2 domain-containing protein tyrosine phosphatase.</title>
        <authorList>
            <person name="Ochi F."/>
            <person name="Matozaki T."/>
            <person name="Noguchi T."/>
            <person name="Fujioka Y."/>
            <person name="Yamao T."/>
            <person name="Takada T."/>
            <person name="Tsuda M."/>
            <person name="Takeda H."/>
            <person name="Fukunaga K."/>
            <person name="Okabayashi Y."/>
            <person name="Kasuga M."/>
        </authorList>
    </citation>
    <scope>PHOSPHORYLATION IN RESPONSE TO EGF</scope>
    <scope>INTERACTION WITH PTPN11</scope>
</reference>
<reference key="7">
    <citation type="journal article" date="1998" name="J. Biol. Chem.">
        <title>Roles of the complex formation of SHPS-1 with SHP-2 in insulin-stimulated mitogen-activated protein kinase activation.</title>
        <authorList>
            <person name="Takada T."/>
            <person name="Matozaki T."/>
            <person name="Takeda H."/>
            <person name="Fukunaga K."/>
            <person name="Noguchi T."/>
            <person name="Fujioka Y."/>
            <person name="Okazaki I."/>
            <person name="Tsuda M."/>
            <person name="Yamao T."/>
            <person name="Ochi F."/>
            <person name="Kasuga M."/>
        </authorList>
    </citation>
    <scope>PHOSPHORYLATION AT TYR-477 AND TYR-501</scope>
    <scope>MUTAGENESIS OF TYR-436; TYR-460; TYR-477 AND TYR-501</scope>
</reference>
<reference key="8">
    <citation type="journal article" date="2013" name="J. Proteome Res.">
        <title>Site-specific glycan-peptide analysis for determination of N-glycoproteome heterogeneity.</title>
        <authorList>
            <person name="Parker B.L."/>
            <person name="Thaysen-Andersen M."/>
            <person name="Solis N."/>
            <person name="Scott N.E."/>
            <person name="Larsen M.R."/>
            <person name="Graham M.E."/>
            <person name="Packer N.H."/>
            <person name="Cordwell S.J."/>
        </authorList>
    </citation>
    <scope>GLYCOSYLATION [LARGE SCALE ANALYSIS] AT ASN-93; ASN-169 AND ASN-312</scope>
    <scope>IDENTIFICATION BY MASS SPECTROMETRY [LARGE SCALE ANALYSIS]</scope>
    <source>
        <tissue>Brain</tissue>
    </source>
</reference>
<reference key="9">
    <citation type="journal article" date="2014" name="J. Am. Soc. Nephrol.">
        <title>Thrombospondin-1 activation of signal-regulatory protein-alpha stimulates reactive oxygen species production and promotes renal ischemia reperfusion injury.</title>
        <authorList>
            <person name="Yao M."/>
            <person name="Rogers N.M."/>
            <person name="Csanyi G."/>
            <person name="Rodriguez A.I."/>
            <person name="Ross M.A."/>
            <person name="St Croix C."/>
            <person name="Knupp H."/>
            <person name="Novelli E.M."/>
            <person name="Thomson A.W."/>
            <person name="Pagano P.J."/>
            <person name="Isenberg J.S."/>
        </authorList>
    </citation>
    <scope>FUNCTION</scope>
    <scope>INTERACTION WITH THBS1</scope>
</reference>
<proteinExistence type="evidence at protein level"/>
<sequence>MEPAGPAPGRLGPLLFCLLLSASCFCAGASGKELKVTQADKSVSVAAGDSATLNCTVSSLTPVGPIKWFKGEGQNRSPIYSFIGGEHFPRITNVSDATKRNNMDFSICISNVTPEDAGTYYCVKFQKGIVEPDTEIKSGGGTTLYVLAKPSSPEVSGPDSRGSPGQTVNFTCKSYGFSPRNITLKWLKDGKELSHLETTISSKSNVSYNISSTVSVKLSPEDIHSRVICEVAHVTLEGRPLNGTANFSNIIRVSPTLKITQQPLTPASQVNLTCQVQKFYPKALQLNWLENGNLSRTDKPEHFTDNRDGTYNYTSLFLVNSSAHREDVVFTCQVEHDSQPAITENHTVRAFAHSSSGGSMETIPDNNAYYNWNVFIGVGVACALLVVLLMAALYLLRIKQKKAKGSTSSTRLHEPEKNAREITQIQDTNDINDITYADLNLPKEKKPAPRVPEPNNHTEYASIETGKLPRPEDTLTYADLDMVHLNRAQPTPKPEPSFSEYASVQVQRK</sequence>
<keyword id="KW-0903">Direct protein sequencing</keyword>
<keyword id="KW-1015">Disulfide bond</keyword>
<keyword id="KW-0325">Glycoprotein</keyword>
<keyword id="KW-0393">Immunoglobulin domain</keyword>
<keyword id="KW-0472">Membrane</keyword>
<keyword id="KW-0597">Phosphoprotein</keyword>
<keyword id="KW-1185">Reference proteome</keyword>
<keyword id="KW-0677">Repeat</keyword>
<keyword id="KW-0729">SH3-binding</keyword>
<keyword id="KW-0732">Signal</keyword>
<keyword id="KW-0812">Transmembrane</keyword>
<keyword id="KW-1133">Transmembrane helix</keyword>
<organism>
    <name type="scientific">Rattus norvegicus</name>
    <name type="common">Rat</name>
    <dbReference type="NCBI Taxonomy" id="10116"/>
    <lineage>
        <taxon>Eukaryota</taxon>
        <taxon>Metazoa</taxon>
        <taxon>Chordata</taxon>
        <taxon>Craniata</taxon>
        <taxon>Vertebrata</taxon>
        <taxon>Euteleostomi</taxon>
        <taxon>Mammalia</taxon>
        <taxon>Eutheria</taxon>
        <taxon>Euarchontoglires</taxon>
        <taxon>Glires</taxon>
        <taxon>Rodentia</taxon>
        <taxon>Myomorpha</taxon>
        <taxon>Muroidea</taxon>
        <taxon>Muridae</taxon>
        <taxon>Murinae</taxon>
        <taxon>Rattus</taxon>
    </lineage>
</organism>
<evidence type="ECO:0000250" key="1">
    <source>
        <dbReference type="UniProtKB" id="P78324"/>
    </source>
</evidence>
<evidence type="ECO:0000250" key="2">
    <source>
        <dbReference type="UniProtKB" id="P97797"/>
    </source>
</evidence>
<evidence type="ECO:0000255" key="3"/>
<evidence type="ECO:0000255" key="4">
    <source>
        <dbReference type="PROSITE-ProRule" id="PRU00114"/>
    </source>
</evidence>
<evidence type="ECO:0000256" key="5">
    <source>
        <dbReference type="SAM" id="MobiDB-lite"/>
    </source>
</evidence>
<evidence type="ECO:0000269" key="6">
    <source>
    </source>
</evidence>
<evidence type="ECO:0000269" key="7">
    <source>
    </source>
</evidence>
<evidence type="ECO:0000269" key="8">
    <source>
    </source>
</evidence>
<evidence type="ECO:0000269" key="9">
    <source>
    </source>
</evidence>
<evidence type="ECO:0000269" key="10">
    <source>
    </source>
</evidence>
<evidence type="ECO:0000269" key="11">
    <source>
    </source>
</evidence>
<evidence type="ECO:0000305" key="12"/>
<evidence type="ECO:0007744" key="13">
    <source>
    </source>
</evidence>
<accession>P97710</accession>
<accession>O08951</accession>
<accession>O70426</accession>
<accession>Q9QWI5</accession>
<gene>
    <name type="primary">Sirpa</name>
    <name type="synonym">Bit</name>
    <name type="synonym">Mfr</name>
    <name type="synonym">Ptpns1</name>
    <name type="synonym">Shps1</name>
    <name type="synonym">Sirp</name>
</gene>